<keyword id="KW-1048">Host nucleus</keyword>
<keyword id="KW-1185">Reference proteome</keyword>
<keyword id="KW-0231">Viral genome packaging</keyword>
<keyword id="KW-1188">Viral release from host cell</keyword>
<organism>
    <name type="scientific">Alcelaphine herpesvirus 1 (strain C500)</name>
    <name type="common">AlHV-1</name>
    <name type="synonym">Malignant catarrhal fever virus</name>
    <dbReference type="NCBI Taxonomy" id="654901"/>
    <lineage>
        <taxon>Viruses</taxon>
        <taxon>Duplodnaviria</taxon>
        <taxon>Heunggongvirae</taxon>
        <taxon>Peploviricota</taxon>
        <taxon>Herviviricetes</taxon>
        <taxon>Herpesvirales</taxon>
        <taxon>Orthoherpesviridae</taxon>
        <taxon>Gammaherpesvirinae</taxon>
        <taxon>Macavirus</taxon>
        <taxon>Macavirus alcelaphinegamma1</taxon>
    </lineage>
</organism>
<sequence length="84" mass="9406">MDLSNLLDFPSILPEDIQVIAPTSYAKLSLLSHCQHLKLFIGQQGSKGVCAHSRVLEEKLEAVKEVISKIIETDKILEKSEKFL</sequence>
<dbReference type="EMBL" id="AF005370">
    <property type="protein sequence ID" value="AAC58115.1"/>
    <property type="molecule type" value="Genomic_DNA"/>
</dbReference>
<dbReference type="PIR" id="T03163">
    <property type="entry name" value="T03163"/>
</dbReference>
<dbReference type="RefSeq" id="NP_065567.1">
    <property type="nucleotide sequence ID" value="NC_002531.1"/>
</dbReference>
<dbReference type="SMR" id="O36418"/>
<dbReference type="KEGG" id="vg:911806"/>
<dbReference type="Proteomes" id="UP000000941">
    <property type="component" value="Segment"/>
</dbReference>
<dbReference type="GO" id="GO:0042025">
    <property type="term" value="C:host cell nucleus"/>
    <property type="evidence" value="ECO:0007669"/>
    <property type="project" value="UniProtKB-SubCell"/>
</dbReference>
<dbReference type="GO" id="GO:0019073">
    <property type="term" value="P:viral DNA genome packaging"/>
    <property type="evidence" value="ECO:0007669"/>
    <property type="project" value="InterPro"/>
</dbReference>
<dbReference type="HAMAP" id="MF_04015">
    <property type="entry name" value="HSV_TRM2"/>
    <property type="match status" value="1"/>
</dbReference>
<dbReference type="InterPro" id="IPR005208">
    <property type="entry name" value="Herpes_TT2"/>
</dbReference>
<dbReference type="Pfam" id="PF03581">
    <property type="entry name" value="Herpes_UL33"/>
    <property type="match status" value="1"/>
</dbReference>
<name>TRM2_ALHV1</name>
<protein>
    <recommendedName>
        <fullName evidence="1">Tripartite terminase subunit 2</fullName>
    </recommendedName>
</protein>
<accession>O36418</accession>
<evidence type="ECO:0000255" key="1">
    <source>
        <dbReference type="HAMAP-Rule" id="MF_04015"/>
    </source>
</evidence>
<proteinExistence type="inferred from homology"/>
<comment type="function">
    <text evidence="1">Component of the molecular motor that translocates viral genomic DNA in empty capsid during DNA packaging. Forms a tripartite terminase complex together with TRM1 and TRM3 in the host cytoplasm. Once the complex reaches the host nucleus, it interacts with the capsid portal vertex. This portal forms a ring in which genomic DNA is translocated into the capsid.</text>
</comment>
<comment type="subunit">
    <text evidence="1">Associates with TRM1 and TRM3 to form the tripartite terminase complex.</text>
</comment>
<comment type="subcellular location">
    <subcellularLocation>
        <location evidence="1">Host nucleus</location>
    </subcellularLocation>
    <text evidence="1">Found associated with the external surface of the viral capsid during assembly and DNA packaging, but seems absent in extracellular mature virions.</text>
</comment>
<comment type="similarity">
    <text evidence="1">Belongs to the herpesviridae TRM2 protein family.</text>
</comment>
<reference key="1">
    <citation type="journal article" date="1997" name="J. Virol.">
        <title>Primary structure of the alcelaphine herpesvirus 1 genome.</title>
        <authorList>
            <person name="Ensser A."/>
            <person name="Pflanz R."/>
            <person name="Fleckenstein B."/>
        </authorList>
    </citation>
    <scope>NUCLEOTIDE SEQUENCE [LARGE SCALE GENOMIC DNA]</scope>
</reference>
<organismHost>
    <name type="scientific">Connochaetes taurinus</name>
    <name type="common">Blue wildebeest</name>
    <dbReference type="NCBI Taxonomy" id="9927"/>
</organismHost>
<gene>
    <name evidence="1" type="primary">TRM2</name>
    <name type="ordered locus">67A</name>
</gene>
<feature type="chain" id="PRO_0000405767" description="Tripartite terminase subunit 2">
    <location>
        <begin position="1"/>
        <end position="84"/>
    </location>
</feature>